<proteinExistence type="evidence at protein level"/>
<name>GMDS_DICDI</name>
<sequence>MSEERKVALITGITGQDGSYLTEFLISKGYYVHGIIQKIFHHFNTIVKNIYIKIDMLKEKESLTLHYGDLTDASNLHSIVSKVNPTEIYNLGAQSHVKVSFDMSEYTGDVDGLGCLRLLDAIRSCGMEKKVKYYQASTSELYGKVQEIPQSETTPFYPRSPYAVAKQYAYWIVVNYREAYDMYACNGILFNHESPRRGPTFVTRKITRFVAGIACGRDEILYLGNINAKRDWGHARDYVEAMWLMLQQEKPEDFVIATGETHSVREFVEKSFKEIDIIIKWRGEAEKEEGYCEKTGKVYVKIDEKYYRPTEVDLLLGNPNKAKKLLQWQIKTSFGELVKEMVAKDIEYIKNGDKYN</sequence>
<keyword id="KW-0903">Direct protein sequencing</keyword>
<keyword id="KW-0456">Lyase</keyword>
<keyword id="KW-0521">NADP</keyword>
<keyword id="KW-1185">Reference proteome</keyword>
<comment type="function">
    <text evidence="2 3">Participates in the synthesis of GDP-L-fucose, catalyzing the conversion of GDP-D-mannose to GDP-4-dehydro-6-deoxy-D-mannose (GDP-4-dehydro-alpha-D-rhamnose) which is further catalyzed by GDP-L-fucose synthase (ger) (PubMed:19614564). GDP-L-fucose is important for the synthesis of fucosylated N-glycans which are expressed on the cell surface (PubMed:19614564).</text>
</comment>
<comment type="catalytic activity">
    <reaction evidence="5">
        <text>GDP-alpha-D-mannose = GDP-4-dehydro-alpha-D-rhamnose + H2O</text>
        <dbReference type="Rhea" id="RHEA:23820"/>
        <dbReference type="ChEBI" id="CHEBI:15377"/>
        <dbReference type="ChEBI" id="CHEBI:57527"/>
        <dbReference type="ChEBI" id="CHEBI:57964"/>
        <dbReference type="EC" id="4.2.1.47"/>
    </reaction>
    <physiologicalReaction direction="left-to-right" evidence="5">
        <dbReference type="Rhea" id="RHEA:23821"/>
    </physiologicalReaction>
</comment>
<comment type="cofactor">
    <cofactor evidence="1">
        <name>NADP(+)</name>
        <dbReference type="ChEBI" id="CHEBI:58349"/>
    </cofactor>
</comment>
<comment type="pathway">
    <text evidence="2">Nucleotide-sugar biosynthesis; GDP-L-fucose biosynthesis via de novo pathway; GDP-L-fucose from GDP-alpha-D-mannose: step 1/2.</text>
</comment>
<comment type="similarity">
    <text evidence="4">Belongs to the NAD(P)-dependent epimerase/dehydratase family. GDP-mannose 4,6-dehydratase subfamily.</text>
</comment>
<accession>Q1ZXF7</accession>
<gene>
    <name type="primary">gmd</name>
    <name type="ORF">DDB_G0284553</name>
</gene>
<feature type="chain" id="PRO_0000327628" description="GDP-mannose 4,6 dehydratase">
    <location>
        <begin position="1"/>
        <end position="356"/>
    </location>
</feature>
<feature type="active site" evidence="1">
    <location>
        <position position="138"/>
    </location>
</feature>
<feature type="active site" description="Nucleophile" evidence="1">
    <location>
        <position position="140"/>
    </location>
</feature>
<feature type="active site" description="Nucleophile" evidence="1">
    <location>
        <position position="162"/>
    </location>
</feature>
<feature type="binding site" evidence="1">
    <location>
        <begin position="12"/>
        <end position="17"/>
    </location>
    <ligand>
        <name>NADP(+)</name>
        <dbReference type="ChEBI" id="CHEBI:58349"/>
    </ligand>
</feature>
<feature type="binding site" evidence="1">
    <location>
        <begin position="69"/>
        <end position="70"/>
    </location>
    <ligand>
        <name>NADP(+)</name>
        <dbReference type="ChEBI" id="CHEBI:58349"/>
    </ligand>
</feature>
<feature type="binding site" evidence="1">
    <location>
        <begin position="91"/>
        <end position="95"/>
    </location>
    <ligand>
        <name>NADP(+)</name>
        <dbReference type="ChEBI" id="CHEBI:58349"/>
    </ligand>
</feature>
<feature type="binding site" evidence="1">
    <location>
        <position position="106"/>
    </location>
    <ligand>
        <name>NADP(+)</name>
        <dbReference type="ChEBI" id="CHEBI:58349"/>
    </ligand>
</feature>
<feature type="binding site" evidence="1">
    <location>
        <position position="166"/>
    </location>
    <ligand>
        <name>NADP(+)</name>
        <dbReference type="ChEBI" id="CHEBI:58349"/>
    </ligand>
</feature>
<feature type="binding site" evidence="1">
    <location>
        <position position="192"/>
    </location>
    <ligand>
        <name>NADP(+)</name>
        <dbReference type="ChEBI" id="CHEBI:58349"/>
    </ligand>
</feature>
<feature type="binding site" evidence="1">
    <location>
        <position position="197"/>
    </location>
    <ligand>
        <name>NADP(+)</name>
        <dbReference type="ChEBI" id="CHEBI:58349"/>
    </ligand>
</feature>
<feature type="sequence variant" description="In strain: HL250; loss of activity.">
    <original>G</original>
    <variation>D</variation>
    <location>
        <position position="108"/>
    </location>
</feature>
<protein>
    <recommendedName>
        <fullName>GDP-mannose 4,6 dehydratase</fullName>
        <ecNumber evidence="5">4.2.1.47</ecNumber>
    </recommendedName>
    <alternativeName>
        <fullName evidence="3">GDP-D-mannose dehydratase</fullName>
        <shortName evidence="3">GMD</shortName>
    </alternativeName>
</protein>
<dbReference type="EC" id="4.2.1.47" evidence="5"/>
<dbReference type="EMBL" id="AAFI02000066">
    <property type="protein sequence ID" value="EAS66860.1"/>
    <property type="molecule type" value="Genomic_DNA"/>
</dbReference>
<dbReference type="RefSeq" id="XP_001134543.1">
    <property type="nucleotide sequence ID" value="XM_001134543.1"/>
</dbReference>
<dbReference type="SMR" id="Q1ZXF7"/>
<dbReference type="FunCoup" id="Q1ZXF7">
    <property type="interactions" value="44"/>
</dbReference>
<dbReference type="STRING" id="44689.Q1ZXF7"/>
<dbReference type="PaxDb" id="44689-DDB0231676"/>
<dbReference type="EnsemblProtists" id="EAS66860">
    <property type="protein sequence ID" value="EAS66860"/>
    <property type="gene ID" value="DDB_G0284553"/>
</dbReference>
<dbReference type="GeneID" id="8624624"/>
<dbReference type="KEGG" id="ddi:DDB_G0284553"/>
<dbReference type="dictyBase" id="DDB_G0284553">
    <property type="gene designation" value="gmd"/>
</dbReference>
<dbReference type="VEuPathDB" id="AmoebaDB:DDB_G0284553"/>
<dbReference type="eggNOG" id="KOG1372">
    <property type="taxonomic scope" value="Eukaryota"/>
</dbReference>
<dbReference type="HOGENOM" id="CLU_007383_14_1_1"/>
<dbReference type="InParanoid" id="Q1ZXF7"/>
<dbReference type="OMA" id="HWQTVNY"/>
<dbReference type="PhylomeDB" id="Q1ZXF7"/>
<dbReference type="Reactome" id="R-DDI-6787639">
    <property type="pathway name" value="GDP-fucose biosynthesis"/>
</dbReference>
<dbReference type="UniPathway" id="UPA00128">
    <property type="reaction ID" value="UER00190"/>
</dbReference>
<dbReference type="PRO" id="PR:Q1ZXF7"/>
<dbReference type="Proteomes" id="UP000002195">
    <property type="component" value="Chromosome 4"/>
</dbReference>
<dbReference type="GO" id="GO:0008446">
    <property type="term" value="F:GDP-mannose 4,6-dehydratase activity"/>
    <property type="evidence" value="ECO:0000314"/>
    <property type="project" value="dictyBase"/>
</dbReference>
<dbReference type="GO" id="GO:0042351">
    <property type="term" value="P:'de novo' GDP-L-fucose biosynthetic process"/>
    <property type="evidence" value="ECO:0000315"/>
    <property type="project" value="dictyBase"/>
</dbReference>
<dbReference type="GO" id="GO:0019673">
    <property type="term" value="P:GDP-mannose metabolic process"/>
    <property type="evidence" value="ECO:0000314"/>
    <property type="project" value="dictyBase"/>
</dbReference>
<dbReference type="GO" id="GO:0009847">
    <property type="term" value="P:spore germination"/>
    <property type="evidence" value="ECO:0000315"/>
    <property type="project" value="dictyBase"/>
</dbReference>
<dbReference type="CDD" id="cd05260">
    <property type="entry name" value="GDP_MD_SDR_e"/>
    <property type="match status" value="1"/>
</dbReference>
<dbReference type="FunFam" id="3.40.50.720:FF:000924">
    <property type="entry name" value="GDP-mannose 4,6 dehydratase"/>
    <property type="match status" value="1"/>
</dbReference>
<dbReference type="Gene3D" id="3.40.50.720">
    <property type="entry name" value="NAD(P)-binding Rossmann-like Domain"/>
    <property type="match status" value="1"/>
</dbReference>
<dbReference type="Gene3D" id="3.90.25.10">
    <property type="entry name" value="UDP-galactose 4-epimerase, domain 1"/>
    <property type="match status" value="1"/>
</dbReference>
<dbReference type="HAMAP" id="MF_00955">
    <property type="entry name" value="GDP_Man_dehydratase"/>
    <property type="match status" value="1"/>
</dbReference>
<dbReference type="InterPro" id="IPR006368">
    <property type="entry name" value="GDP_Man_deHydtase"/>
</dbReference>
<dbReference type="InterPro" id="IPR016040">
    <property type="entry name" value="NAD(P)-bd_dom"/>
</dbReference>
<dbReference type="InterPro" id="IPR036291">
    <property type="entry name" value="NAD(P)-bd_dom_sf"/>
</dbReference>
<dbReference type="NCBIfam" id="TIGR01472">
    <property type="entry name" value="gmd"/>
    <property type="match status" value="1"/>
</dbReference>
<dbReference type="PANTHER" id="PTHR43715:SF1">
    <property type="entry name" value="GDP-MANNOSE 4,6 DEHYDRATASE"/>
    <property type="match status" value="1"/>
</dbReference>
<dbReference type="PANTHER" id="PTHR43715">
    <property type="entry name" value="GDP-MANNOSE 4,6-DEHYDRATASE"/>
    <property type="match status" value="1"/>
</dbReference>
<dbReference type="Pfam" id="PF16363">
    <property type="entry name" value="GDP_Man_Dehyd"/>
    <property type="match status" value="1"/>
</dbReference>
<dbReference type="SUPFAM" id="SSF51735">
    <property type="entry name" value="NAD(P)-binding Rossmann-fold domains"/>
    <property type="match status" value="1"/>
</dbReference>
<reference key="1">
    <citation type="journal article" date="2009" name="Biochem. J.">
        <title>Development of Dictyostelium discoideum is associated with alteration of fucosylated N-glycan structures.</title>
        <authorList>
            <person name="Schiller B."/>
            <person name="Hykollari A."/>
            <person name="Voglmeir J."/>
            <person name="Poltl G."/>
            <person name="Hummel K."/>
            <person name="Razzazi-Fazeli E."/>
            <person name="Geyer R."/>
            <person name="Wilson I.B.H."/>
        </authorList>
    </citation>
    <scope>NUCLEOTIDE SEQUENCE [MRNA]</scope>
    <scope>IDENTIFICATION</scope>
    <scope>FUNCTION</scope>
    <scope>CATALYTIC ACTIVITY</scope>
    <scope>PATHWAY</scope>
    <source>
        <strain>HL250</strain>
    </source>
</reference>
<reference key="2">
    <citation type="journal article" date="2005" name="Nature">
        <title>The genome of the social amoeba Dictyostelium discoideum.</title>
        <authorList>
            <person name="Eichinger L."/>
            <person name="Pachebat J.A."/>
            <person name="Gloeckner G."/>
            <person name="Rajandream M.A."/>
            <person name="Sucgang R."/>
            <person name="Berriman M."/>
            <person name="Song J."/>
            <person name="Olsen R."/>
            <person name="Szafranski K."/>
            <person name="Xu Q."/>
            <person name="Tunggal B."/>
            <person name="Kummerfeld S."/>
            <person name="Madera M."/>
            <person name="Konfortov B.A."/>
            <person name="Rivero F."/>
            <person name="Bankier A.T."/>
            <person name="Lehmann R."/>
            <person name="Hamlin N."/>
            <person name="Davies R."/>
            <person name="Gaudet P."/>
            <person name="Fey P."/>
            <person name="Pilcher K."/>
            <person name="Chen G."/>
            <person name="Saunders D."/>
            <person name="Sodergren E.J."/>
            <person name="Davis P."/>
            <person name="Kerhornou A."/>
            <person name="Nie X."/>
            <person name="Hall N."/>
            <person name="Anjard C."/>
            <person name="Hemphill L."/>
            <person name="Bason N."/>
            <person name="Farbrother P."/>
            <person name="Desany B."/>
            <person name="Just E."/>
            <person name="Morio T."/>
            <person name="Rost R."/>
            <person name="Churcher C.M."/>
            <person name="Cooper J."/>
            <person name="Haydock S."/>
            <person name="van Driessche N."/>
            <person name="Cronin A."/>
            <person name="Goodhead I."/>
            <person name="Muzny D.M."/>
            <person name="Mourier T."/>
            <person name="Pain A."/>
            <person name="Lu M."/>
            <person name="Harper D."/>
            <person name="Lindsay R."/>
            <person name="Hauser H."/>
            <person name="James K.D."/>
            <person name="Quiles M."/>
            <person name="Madan Babu M."/>
            <person name="Saito T."/>
            <person name="Buchrieser C."/>
            <person name="Wardroper A."/>
            <person name="Felder M."/>
            <person name="Thangavelu M."/>
            <person name="Johnson D."/>
            <person name="Knights A."/>
            <person name="Loulseged H."/>
            <person name="Mungall K.L."/>
            <person name="Oliver K."/>
            <person name="Price C."/>
            <person name="Quail M.A."/>
            <person name="Urushihara H."/>
            <person name="Hernandez J."/>
            <person name="Rabbinowitsch E."/>
            <person name="Steffen D."/>
            <person name="Sanders M."/>
            <person name="Ma J."/>
            <person name="Kohara Y."/>
            <person name="Sharp S."/>
            <person name="Simmonds M.N."/>
            <person name="Spiegler S."/>
            <person name="Tivey A."/>
            <person name="Sugano S."/>
            <person name="White B."/>
            <person name="Walker D."/>
            <person name="Woodward J.R."/>
            <person name="Winckler T."/>
            <person name="Tanaka Y."/>
            <person name="Shaulsky G."/>
            <person name="Schleicher M."/>
            <person name="Weinstock G.M."/>
            <person name="Rosenthal A."/>
            <person name="Cox E.C."/>
            <person name="Chisholm R.L."/>
            <person name="Gibbs R.A."/>
            <person name="Loomis W.F."/>
            <person name="Platzer M."/>
            <person name="Kay R.R."/>
            <person name="Williams J.G."/>
            <person name="Dear P.H."/>
            <person name="Noegel A.A."/>
            <person name="Barrell B.G."/>
            <person name="Kuspa A."/>
        </authorList>
    </citation>
    <scope>NUCLEOTIDE SEQUENCE [LARGE SCALE GENOMIC DNA]</scope>
    <source>
        <strain>AX4</strain>
    </source>
</reference>
<reference key="3">
    <citation type="submission" date="2010-01" db="UniProtKB">
        <authorList>
            <person name="Bienvenut W.V."/>
            <person name="Veltman D.M."/>
            <person name="Insall R.H."/>
        </authorList>
    </citation>
    <scope>PROTEIN SEQUENCE OF 62-98; 131-159; 218-229; 271-280; 306-321 AND 324-344</scope>
    <scope>IDENTIFICATION BY MASS SPECTROMETRY</scope>
</reference>
<evidence type="ECO:0000250" key="1"/>
<evidence type="ECO:0000269" key="2">
    <source>
    </source>
</evidence>
<evidence type="ECO:0000303" key="3">
    <source>
    </source>
</evidence>
<evidence type="ECO:0000305" key="4"/>
<evidence type="ECO:0000305" key="5">
    <source>
    </source>
</evidence>
<organism>
    <name type="scientific">Dictyostelium discoideum</name>
    <name type="common">Social amoeba</name>
    <dbReference type="NCBI Taxonomy" id="44689"/>
    <lineage>
        <taxon>Eukaryota</taxon>
        <taxon>Amoebozoa</taxon>
        <taxon>Evosea</taxon>
        <taxon>Eumycetozoa</taxon>
        <taxon>Dictyostelia</taxon>
        <taxon>Dictyosteliales</taxon>
        <taxon>Dictyosteliaceae</taxon>
        <taxon>Dictyostelium</taxon>
    </lineage>
</organism>